<gene>
    <name evidence="1" type="primary">rpsG</name>
    <name type="ordered locus">BCc_345</name>
</gene>
<organism>
    <name type="scientific">Buchnera aphidicola subsp. Cinara cedri (strain Cc)</name>
    <dbReference type="NCBI Taxonomy" id="372461"/>
    <lineage>
        <taxon>Bacteria</taxon>
        <taxon>Pseudomonadati</taxon>
        <taxon>Pseudomonadota</taxon>
        <taxon>Gammaproteobacteria</taxon>
        <taxon>Enterobacterales</taxon>
        <taxon>Erwiniaceae</taxon>
        <taxon>Buchnera</taxon>
    </lineage>
</organism>
<name>RS7_BUCCC</name>
<feature type="chain" id="PRO_1000014153" description="Small ribosomal subunit protein uS7">
    <location>
        <begin position="1"/>
        <end position="156"/>
    </location>
</feature>
<keyword id="KW-1185">Reference proteome</keyword>
<keyword id="KW-0687">Ribonucleoprotein</keyword>
<keyword id="KW-0689">Ribosomal protein</keyword>
<keyword id="KW-0694">RNA-binding</keyword>
<keyword id="KW-0699">rRNA-binding</keyword>
<keyword id="KW-0820">tRNA-binding</keyword>
<accession>Q057A0</accession>
<evidence type="ECO:0000255" key="1">
    <source>
        <dbReference type="HAMAP-Rule" id="MF_00480"/>
    </source>
</evidence>
<evidence type="ECO:0000305" key="2"/>
<reference key="1">
    <citation type="journal article" date="2006" name="Science">
        <title>A small microbial genome: the end of a long symbiotic relationship?</title>
        <authorList>
            <person name="Perez-Brocal V."/>
            <person name="Gil R."/>
            <person name="Ramos S."/>
            <person name="Lamelas A."/>
            <person name="Postigo M."/>
            <person name="Michelena J.M."/>
            <person name="Silva F.J."/>
            <person name="Moya A."/>
            <person name="Latorre A."/>
        </authorList>
    </citation>
    <scope>NUCLEOTIDE SEQUENCE [LARGE SCALE GENOMIC DNA]</scope>
    <source>
        <strain>Cc</strain>
    </source>
</reference>
<dbReference type="EMBL" id="CP000263">
    <property type="protein sequence ID" value="ABJ90799.1"/>
    <property type="molecule type" value="Genomic_DNA"/>
</dbReference>
<dbReference type="RefSeq" id="WP_011672718.1">
    <property type="nucleotide sequence ID" value="NC_008513.1"/>
</dbReference>
<dbReference type="SMR" id="Q057A0"/>
<dbReference type="STRING" id="372461.BCc_345"/>
<dbReference type="KEGG" id="bcc:BCc_345"/>
<dbReference type="eggNOG" id="COG0049">
    <property type="taxonomic scope" value="Bacteria"/>
</dbReference>
<dbReference type="HOGENOM" id="CLU_072226_1_1_6"/>
<dbReference type="OrthoDB" id="9807653at2"/>
<dbReference type="Proteomes" id="UP000000669">
    <property type="component" value="Chromosome"/>
</dbReference>
<dbReference type="GO" id="GO:0015935">
    <property type="term" value="C:small ribosomal subunit"/>
    <property type="evidence" value="ECO:0007669"/>
    <property type="project" value="InterPro"/>
</dbReference>
<dbReference type="GO" id="GO:0019843">
    <property type="term" value="F:rRNA binding"/>
    <property type="evidence" value="ECO:0007669"/>
    <property type="project" value="UniProtKB-UniRule"/>
</dbReference>
<dbReference type="GO" id="GO:0003735">
    <property type="term" value="F:structural constituent of ribosome"/>
    <property type="evidence" value="ECO:0007669"/>
    <property type="project" value="InterPro"/>
</dbReference>
<dbReference type="GO" id="GO:0000049">
    <property type="term" value="F:tRNA binding"/>
    <property type="evidence" value="ECO:0007669"/>
    <property type="project" value="UniProtKB-UniRule"/>
</dbReference>
<dbReference type="GO" id="GO:0006412">
    <property type="term" value="P:translation"/>
    <property type="evidence" value="ECO:0007669"/>
    <property type="project" value="UniProtKB-UniRule"/>
</dbReference>
<dbReference type="CDD" id="cd14869">
    <property type="entry name" value="uS7_Bacteria"/>
    <property type="match status" value="1"/>
</dbReference>
<dbReference type="FunFam" id="1.10.455.10:FF:000001">
    <property type="entry name" value="30S ribosomal protein S7"/>
    <property type="match status" value="1"/>
</dbReference>
<dbReference type="Gene3D" id="1.10.455.10">
    <property type="entry name" value="Ribosomal protein S7 domain"/>
    <property type="match status" value="1"/>
</dbReference>
<dbReference type="HAMAP" id="MF_00480_B">
    <property type="entry name" value="Ribosomal_uS7_B"/>
    <property type="match status" value="1"/>
</dbReference>
<dbReference type="InterPro" id="IPR000235">
    <property type="entry name" value="Ribosomal_uS7"/>
</dbReference>
<dbReference type="InterPro" id="IPR005717">
    <property type="entry name" value="Ribosomal_uS7_bac/org-type"/>
</dbReference>
<dbReference type="InterPro" id="IPR020606">
    <property type="entry name" value="Ribosomal_uS7_CS"/>
</dbReference>
<dbReference type="InterPro" id="IPR023798">
    <property type="entry name" value="Ribosomal_uS7_dom"/>
</dbReference>
<dbReference type="InterPro" id="IPR036823">
    <property type="entry name" value="Ribosomal_uS7_dom_sf"/>
</dbReference>
<dbReference type="NCBIfam" id="TIGR01029">
    <property type="entry name" value="rpsG_bact"/>
    <property type="match status" value="1"/>
</dbReference>
<dbReference type="PANTHER" id="PTHR11205">
    <property type="entry name" value="RIBOSOMAL PROTEIN S7"/>
    <property type="match status" value="1"/>
</dbReference>
<dbReference type="Pfam" id="PF00177">
    <property type="entry name" value="Ribosomal_S7"/>
    <property type="match status" value="1"/>
</dbReference>
<dbReference type="PIRSF" id="PIRSF002122">
    <property type="entry name" value="RPS7p_RPS7a_RPS5e_RPS7o"/>
    <property type="match status" value="1"/>
</dbReference>
<dbReference type="SUPFAM" id="SSF47973">
    <property type="entry name" value="Ribosomal protein S7"/>
    <property type="match status" value="1"/>
</dbReference>
<dbReference type="PROSITE" id="PS00052">
    <property type="entry name" value="RIBOSOMAL_S7"/>
    <property type="match status" value="1"/>
</dbReference>
<protein>
    <recommendedName>
        <fullName evidence="1">Small ribosomal subunit protein uS7</fullName>
    </recommendedName>
    <alternativeName>
        <fullName evidence="2">30S ribosomal protein S7</fullName>
    </alternativeName>
</protein>
<comment type="function">
    <text evidence="1">One of the primary rRNA binding proteins, it binds directly to 16S rRNA where it nucleates assembly of the head domain of the 30S subunit. Is located at the subunit interface close to the decoding center, probably blocks exit of the E-site tRNA.</text>
</comment>
<comment type="subunit">
    <text evidence="1">Part of the 30S ribosomal subunit. Contacts proteins S9 and S11.</text>
</comment>
<comment type="similarity">
    <text evidence="1">Belongs to the universal ribosomal protein uS7 family.</text>
</comment>
<proteinExistence type="inferred from homology"/>
<sequence length="156" mass="17955">MPRRRIIGQRKILPDPKFSSELLAKFINILMINGKKSIAENIVYSALHQLSIKVKKKELDIFIAALDNVKPVVEVKSRRVGGSTYQVPVEVRPVRRNALAMRWIIDAARKRIDRSMSIRLTNELLDALENKGAAVRKREEVHKMADANKAFAHYRW</sequence>